<reference key="1">
    <citation type="journal article" date="2009" name="BMC Genomics">
        <title>Metabolic analysis of the soil microbe Dechloromonas aromatica str. RCB: indications of a surprisingly complex life-style and cryptic anaerobic pathways for aromatic degradation.</title>
        <authorList>
            <person name="Salinero K.K."/>
            <person name="Keller K."/>
            <person name="Feil W.S."/>
            <person name="Feil H."/>
            <person name="Trong S."/>
            <person name="Di Bartolo G."/>
            <person name="Lapidus A."/>
        </authorList>
    </citation>
    <scope>NUCLEOTIDE SEQUENCE [LARGE SCALE GENOMIC DNA]</scope>
    <source>
        <strain>RCB</strain>
    </source>
</reference>
<sequence length="355" mass="39370">MSRPKNDTFLRALLKEPTEYTPLWLMRQAGRYLPEYCETRKRAGNFLNLCKSPTMACEVTLQPLARYDLDAAILFSDILTVPDAMGLGLYFAEGEGPKFERPLREEWAINNLTVTDPYEHLGYVMDAVSEIRRALDNSVPLIGFSGSPYTLACYMVEGEGSSDFRNIKAMLYNRPDLLHRILSVTADSVIAYLNAQIDSGAQAVMIFDTWGGSLSNAAYEEFSLQYMRRIVAGLKKEKDGQRIPSIVFTKNGGLWLEKIADIGCDAVGLDWTIDIGEARRRVGDKVALQGNLDPNVLFAQPEIVAAEAKKVLDSFGPANTGHVFNLGHGISQFTPPESVTALVEAVHSHSRLSRK</sequence>
<accession>Q47K40</accession>
<dbReference type="EC" id="4.1.1.37" evidence="1"/>
<dbReference type="EMBL" id="CP000089">
    <property type="protein sequence ID" value="AAZ44791.1"/>
    <property type="molecule type" value="Genomic_DNA"/>
</dbReference>
<dbReference type="SMR" id="Q47K40"/>
<dbReference type="STRING" id="159087.Daro_0032"/>
<dbReference type="KEGG" id="dar:Daro_0032"/>
<dbReference type="eggNOG" id="COG0407">
    <property type="taxonomic scope" value="Bacteria"/>
</dbReference>
<dbReference type="HOGENOM" id="CLU_040933_0_0_4"/>
<dbReference type="OrthoDB" id="9806656at2"/>
<dbReference type="UniPathway" id="UPA00251">
    <property type="reaction ID" value="UER00321"/>
</dbReference>
<dbReference type="GO" id="GO:0005829">
    <property type="term" value="C:cytosol"/>
    <property type="evidence" value="ECO:0007669"/>
    <property type="project" value="TreeGrafter"/>
</dbReference>
<dbReference type="GO" id="GO:0004853">
    <property type="term" value="F:uroporphyrinogen decarboxylase activity"/>
    <property type="evidence" value="ECO:0007669"/>
    <property type="project" value="UniProtKB-UniRule"/>
</dbReference>
<dbReference type="GO" id="GO:0019353">
    <property type="term" value="P:protoporphyrinogen IX biosynthetic process from glutamate"/>
    <property type="evidence" value="ECO:0007669"/>
    <property type="project" value="TreeGrafter"/>
</dbReference>
<dbReference type="CDD" id="cd00717">
    <property type="entry name" value="URO-D"/>
    <property type="match status" value="1"/>
</dbReference>
<dbReference type="FunFam" id="3.20.20.210:FF:000001">
    <property type="entry name" value="Uroporphyrinogen decarboxylase"/>
    <property type="match status" value="1"/>
</dbReference>
<dbReference type="Gene3D" id="3.20.20.210">
    <property type="match status" value="1"/>
</dbReference>
<dbReference type="HAMAP" id="MF_00218">
    <property type="entry name" value="URO_D"/>
    <property type="match status" value="1"/>
</dbReference>
<dbReference type="InterPro" id="IPR038071">
    <property type="entry name" value="UROD/MetE-like_sf"/>
</dbReference>
<dbReference type="InterPro" id="IPR006361">
    <property type="entry name" value="Uroporphyrinogen_deCO2ase_HemE"/>
</dbReference>
<dbReference type="InterPro" id="IPR000257">
    <property type="entry name" value="Uroporphyrinogen_deCOase"/>
</dbReference>
<dbReference type="NCBIfam" id="TIGR01464">
    <property type="entry name" value="hemE"/>
    <property type="match status" value="1"/>
</dbReference>
<dbReference type="PANTHER" id="PTHR21091">
    <property type="entry name" value="METHYLTETRAHYDROFOLATE:HOMOCYSTEINE METHYLTRANSFERASE RELATED"/>
    <property type="match status" value="1"/>
</dbReference>
<dbReference type="PANTHER" id="PTHR21091:SF169">
    <property type="entry name" value="UROPORPHYRINOGEN DECARBOXYLASE"/>
    <property type="match status" value="1"/>
</dbReference>
<dbReference type="Pfam" id="PF01208">
    <property type="entry name" value="URO-D"/>
    <property type="match status" value="1"/>
</dbReference>
<dbReference type="SUPFAM" id="SSF51726">
    <property type="entry name" value="UROD/MetE-like"/>
    <property type="match status" value="1"/>
</dbReference>
<dbReference type="PROSITE" id="PS00906">
    <property type="entry name" value="UROD_1"/>
    <property type="match status" value="1"/>
</dbReference>
<dbReference type="PROSITE" id="PS00907">
    <property type="entry name" value="UROD_2"/>
    <property type="match status" value="1"/>
</dbReference>
<protein>
    <recommendedName>
        <fullName evidence="1">Uroporphyrinogen decarboxylase</fullName>
        <shortName evidence="1">UPD</shortName>
        <shortName evidence="1">URO-D</shortName>
        <ecNumber evidence="1">4.1.1.37</ecNumber>
    </recommendedName>
</protein>
<feature type="chain" id="PRO_1000023901" description="Uroporphyrinogen decarboxylase">
    <location>
        <begin position="1"/>
        <end position="355"/>
    </location>
</feature>
<feature type="binding site" evidence="1">
    <location>
        <begin position="27"/>
        <end position="31"/>
    </location>
    <ligand>
        <name>substrate</name>
    </ligand>
</feature>
<feature type="binding site" evidence="1">
    <location>
        <position position="77"/>
    </location>
    <ligand>
        <name>substrate</name>
    </ligand>
</feature>
<feature type="binding site" evidence="1">
    <location>
        <position position="154"/>
    </location>
    <ligand>
        <name>substrate</name>
    </ligand>
</feature>
<feature type="binding site" evidence="1">
    <location>
        <position position="209"/>
    </location>
    <ligand>
        <name>substrate</name>
    </ligand>
</feature>
<feature type="binding site" evidence="1">
    <location>
        <position position="328"/>
    </location>
    <ligand>
        <name>substrate</name>
    </ligand>
</feature>
<feature type="site" description="Transition state stabilizer" evidence="1">
    <location>
        <position position="77"/>
    </location>
</feature>
<proteinExistence type="inferred from homology"/>
<comment type="function">
    <text evidence="1">Catalyzes the decarboxylation of four acetate groups of uroporphyrinogen-III to yield coproporphyrinogen-III.</text>
</comment>
<comment type="catalytic activity">
    <reaction evidence="1">
        <text>uroporphyrinogen III + 4 H(+) = coproporphyrinogen III + 4 CO2</text>
        <dbReference type="Rhea" id="RHEA:19865"/>
        <dbReference type="ChEBI" id="CHEBI:15378"/>
        <dbReference type="ChEBI" id="CHEBI:16526"/>
        <dbReference type="ChEBI" id="CHEBI:57308"/>
        <dbReference type="ChEBI" id="CHEBI:57309"/>
        <dbReference type="EC" id="4.1.1.37"/>
    </reaction>
</comment>
<comment type="pathway">
    <text evidence="1">Porphyrin-containing compound metabolism; protoporphyrin-IX biosynthesis; coproporphyrinogen-III from 5-aminolevulinate: step 4/4.</text>
</comment>
<comment type="subunit">
    <text evidence="1">Homodimer.</text>
</comment>
<comment type="subcellular location">
    <subcellularLocation>
        <location evidence="1">Cytoplasm</location>
    </subcellularLocation>
</comment>
<comment type="similarity">
    <text evidence="1">Belongs to the uroporphyrinogen decarboxylase family.</text>
</comment>
<gene>
    <name evidence="1" type="primary">hemE</name>
    <name type="ordered locus">Daro_0032</name>
</gene>
<organism>
    <name type="scientific">Dechloromonas aromatica (strain RCB)</name>
    <dbReference type="NCBI Taxonomy" id="159087"/>
    <lineage>
        <taxon>Bacteria</taxon>
        <taxon>Pseudomonadati</taxon>
        <taxon>Pseudomonadota</taxon>
        <taxon>Betaproteobacteria</taxon>
        <taxon>Rhodocyclales</taxon>
        <taxon>Azonexaceae</taxon>
        <taxon>Dechloromonas</taxon>
    </lineage>
</organism>
<keyword id="KW-0963">Cytoplasm</keyword>
<keyword id="KW-0210">Decarboxylase</keyword>
<keyword id="KW-0456">Lyase</keyword>
<keyword id="KW-0627">Porphyrin biosynthesis</keyword>
<evidence type="ECO:0000255" key="1">
    <source>
        <dbReference type="HAMAP-Rule" id="MF_00218"/>
    </source>
</evidence>
<name>DCUP_DECAR</name>